<evidence type="ECO:0000255" key="1">
    <source>
        <dbReference type="HAMAP-Rule" id="MF_00464"/>
    </source>
</evidence>
<evidence type="ECO:0000305" key="2"/>
<keyword id="KW-0068">Autocatalytic cleavage</keyword>
<keyword id="KW-0210">Decarboxylase</keyword>
<keyword id="KW-0456">Lyase</keyword>
<keyword id="KW-0620">Polyamine biosynthesis</keyword>
<keyword id="KW-0670">Pyruvate</keyword>
<keyword id="KW-0949">S-adenosyl-L-methionine</keyword>
<keyword id="KW-0704">Schiff base</keyword>
<keyword id="KW-0745">Spermidine biosynthesis</keyword>
<keyword id="KW-0865">Zymogen</keyword>
<feature type="chain" id="PRO_1000013668" description="S-adenosylmethionine decarboxylase beta chain" evidence="1">
    <location>
        <begin position="1"/>
        <end position="62"/>
    </location>
</feature>
<feature type="chain" id="PRO_0000315021" description="S-adenosylmethionine decarboxylase alpha chain" evidence="1">
    <location>
        <begin position="63"/>
        <end position="126"/>
    </location>
</feature>
<feature type="active site" description="Schiff-base intermediate with substrate; via pyruvic acid" evidence="1">
    <location>
        <position position="63"/>
    </location>
</feature>
<feature type="active site" description="Proton acceptor; for processing activity" evidence="1">
    <location>
        <position position="68"/>
    </location>
</feature>
<feature type="active site" description="Proton donor; for catalytic activity" evidence="1">
    <location>
        <position position="83"/>
    </location>
</feature>
<feature type="site" description="Cleavage (non-hydrolytic); by autolysis" evidence="1">
    <location>
        <begin position="62"/>
        <end position="63"/>
    </location>
</feature>
<feature type="modified residue" description="Pyruvic acid (Ser); by autocatalysis" evidence="1">
    <location>
        <position position="63"/>
    </location>
</feature>
<sequence length="126" mass="13859">METMGRHVISELWGCDFDKLNDMDFIEKTFVNAALKSGAEVREVAFHKFAPQGVSGVVIISESHLTIHSFPEHGYASIDVYTCGDLDPNVAADYIADALHADTRENIEIPRGMGPVQIKQAQAKVL</sequence>
<name>SPEH_BACVZ</name>
<organism>
    <name type="scientific">Bacillus velezensis (strain DSM 23117 / BGSC 10A6 / LMG 26770 / FZB42)</name>
    <name type="common">Bacillus amyloliquefaciens subsp. plantarum</name>
    <dbReference type="NCBI Taxonomy" id="326423"/>
    <lineage>
        <taxon>Bacteria</taxon>
        <taxon>Bacillati</taxon>
        <taxon>Bacillota</taxon>
        <taxon>Bacilli</taxon>
        <taxon>Bacillales</taxon>
        <taxon>Bacillaceae</taxon>
        <taxon>Bacillus</taxon>
        <taxon>Bacillus amyloliquefaciens group</taxon>
    </lineage>
</organism>
<gene>
    <name evidence="1" type="primary">speH</name>
    <name type="ordered locus">RBAM_026050</name>
</gene>
<comment type="function">
    <text evidence="1">Catalyzes the decarboxylation of S-adenosylmethionine to S-adenosylmethioninamine (dcAdoMet), the propylamine donor required for the synthesis of the polyamines spermine and spermidine from the diamine putrescine.</text>
</comment>
<comment type="catalytic activity">
    <reaction evidence="1">
        <text>S-adenosyl-L-methionine + H(+) = S-adenosyl 3-(methylsulfanyl)propylamine + CO2</text>
        <dbReference type="Rhea" id="RHEA:15981"/>
        <dbReference type="ChEBI" id="CHEBI:15378"/>
        <dbReference type="ChEBI" id="CHEBI:16526"/>
        <dbReference type="ChEBI" id="CHEBI:57443"/>
        <dbReference type="ChEBI" id="CHEBI:59789"/>
        <dbReference type="EC" id="4.1.1.50"/>
    </reaction>
</comment>
<comment type="cofactor">
    <cofactor evidence="1">
        <name>pyruvate</name>
        <dbReference type="ChEBI" id="CHEBI:15361"/>
    </cofactor>
    <text evidence="1">Binds 1 pyruvoyl group covalently per subunit.</text>
</comment>
<comment type="pathway">
    <text evidence="1">Amine and polyamine biosynthesis; S-adenosylmethioninamine biosynthesis; S-adenosylmethioninamine from S-adenosyl-L-methionine: step 1/1.</text>
</comment>
<comment type="subunit">
    <text evidence="1">Heterotetramer of two alpha and two beta chains arranged as a dimer of alpha/beta heterodimers.</text>
</comment>
<comment type="PTM">
    <text evidence="1">Is synthesized initially as an inactive proenzyme. Formation of the active enzyme involves a self-maturation process in which the active site pyruvoyl group is generated from an internal serine residue via an autocatalytic post-translational modification. Two non-identical subunits are generated from the proenzyme in this reaction, and the pyruvate is formed at the N-terminus of the alpha chain, which is derived from the carboxyl end of the proenzyme. The post-translation cleavage follows an unusual pathway, termed non-hydrolytic serinolysis, in which the side chain hydroxyl group of the serine supplies its oxygen atom to form the C-terminus of the beta chain, while the remainder of the serine residue undergoes an oxidative deamination to produce ammonia and the pyruvoyl group blocking the N-terminus of the alpha chain.</text>
</comment>
<comment type="similarity">
    <text evidence="1">Belongs to the prokaryotic AdoMetDC family. Type 1 subfamily.</text>
</comment>
<comment type="sequence caution" evidence="2">
    <conflict type="erroneous initiation">
        <sequence resource="EMBL-CDS" id="ABS74963"/>
    </conflict>
</comment>
<reference key="1">
    <citation type="journal article" date="2007" name="Nat. Biotechnol.">
        <title>Comparative analysis of the complete genome sequence of the plant growth-promoting bacterium Bacillus amyloliquefaciens FZB42.</title>
        <authorList>
            <person name="Chen X.H."/>
            <person name="Koumoutsi A."/>
            <person name="Scholz R."/>
            <person name="Eisenreich A."/>
            <person name="Schneider K."/>
            <person name="Heinemeyer I."/>
            <person name="Morgenstern B."/>
            <person name="Voss B."/>
            <person name="Hess W.R."/>
            <person name="Reva O."/>
            <person name="Junge H."/>
            <person name="Voigt B."/>
            <person name="Jungblut P.R."/>
            <person name="Vater J."/>
            <person name="Suessmuth R."/>
            <person name="Liesegang H."/>
            <person name="Strittmatter A."/>
            <person name="Gottschalk G."/>
            <person name="Borriss R."/>
        </authorList>
    </citation>
    <scope>NUCLEOTIDE SEQUENCE [LARGE SCALE GENOMIC DNA]</scope>
    <source>
        <strain>DSM 23117 / BGSC 10A6 / LMG 26770 / FZB42</strain>
    </source>
</reference>
<accession>A7Z7I7</accession>
<proteinExistence type="inferred from homology"/>
<protein>
    <recommendedName>
        <fullName evidence="1">S-adenosylmethionine decarboxylase proenzyme</fullName>
        <shortName evidence="1">AdoMetDC</shortName>
        <shortName evidence="1">SAMDC</shortName>
        <ecNumber evidence="1">4.1.1.50</ecNumber>
    </recommendedName>
    <component>
        <recommendedName>
            <fullName evidence="1">S-adenosylmethionine decarboxylase beta chain</fullName>
        </recommendedName>
    </component>
    <component>
        <recommendedName>
            <fullName evidence="1">S-adenosylmethionine decarboxylase alpha chain</fullName>
        </recommendedName>
    </component>
</protein>
<dbReference type="EC" id="4.1.1.50" evidence="1"/>
<dbReference type="EMBL" id="CP000560">
    <property type="protein sequence ID" value="ABS74963.1"/>
    <property type="status" value="ALT_INIT"/>
    <property type="molecule type" value="Genomic_DNA"/>
</dbReference>
<dbReference type="SMR" id="A7Z7I7"/>
<dbReference type="GeneID" id="93081747"/>
<dbReference type="KEGG" id="bay:RBAM_026050"/>
<dbReference type="HOGENOM" id="CLU_125470_2_3_9"/>
<dbReference type="UniPathway" id="UPA00331">
    <property type="reaction ID" value="UER00451"/>
</dbReference>
<dbReference type="Proteomes" id="UP000001120">
    <property type="component" value="Chromosome"/>
</dbReference>
<dbReference type="GO" id="GO:0005829">
    <property type="term" value="C:cytosol"/>
    <property type="evidence" value="ECO:0007669"/>
    <property type="project" value="TreeGrafter"/>
</dbReference>
<dbReference type="GO" id="GO:0004014">
    <property type="term" value="F:adenosylmethionine decarboxylase activity"/>
    <property type="evidence" value="ECO:0007669"/>
    <property type="project" value="UniProtKB-UniRule"/>
</dbReference>
<dbReference type="GO" id="GO:0008295">
    <property type="term" value="P:spermidine biosynthetic process"/>
    <property type="evidence" value="ECO:0007669"/>
    <property type="project" value="UniProtKB-UniRule"/>
</dbReference>
<dbReference type="FunFam" id="3.30.160.750:FF:000001">
    <property type="entry name" value="S-adenosylmethionine decarboxylase proenzyme"/>
    <property type="match status" value="1"/>
</dbReference>
<dbReference type="FunFam" id="3.30.360.110:FF:000001">
    <property type="entry name" value="S-adenosylmethionine decarboxylase proenzyme"/>
    <property type="match status" value="1"/>
</dbReference>
<dbReference type="Gene3D" id="3.30.160.750">
    <property type="match status" value="1"/>
</dbReference>
<dbReference type="Gene3D" id="3.30.360.110">
    <property type="entry name" value="S-adenosylmethionine decarboxylase domain"/>
    <property type="match status" value="1"/>
</dbReference>
<dbReference type="HAMAP" id="MF_00464">
    <property type="entry name" value="AdoMetDC_1"/>
    <property type="match status" value="1"/>
</dbReference>
<dbReference type="InterPro" id="IPR042286">
    <property type="entry name" value="AdoMetDC_C"/>
</dbReference>
<dbReference type="InterPro" id="IPR003826">
    <property type="entry name" value="AdoMetDC_fam_prok"/>
</dbReference>
<dbReference type="InterPro" id="IPR042284">
    <property type="entry name" value="AdoMetDC_N"/>
</dbReference>
<dbReference type="InterPro" id="IPR016067">
    <property type="entry name" value="S-AdoMet_deCO2ase_core"/>
</dbReference>
<dbReference type="InterPro" id="IPR017716">
    <property type="entry name" value="S-AdoMet_deCOase_pro-enz"/>
</dbReference>
<dbReference type="NCBIfam" id="TIGR03330">
    <property type="entry name" value="SAM_DCase_Bsu"/>
    <property type="match status" value="1"/>
</dbReference>
<dbReference type="PANTHER" id="PTHR33866">
    <property type="entry name" value="S-ADENOSYLMETHIONINE DECARBOXYLASE PROENZYME"/>
    <property type="match status" value="1"/>
</dbReference>
<dbReference type="PANTHER" id="PTHR33866:SF2">
    <property type="entry name" value="S-ADENOSYLMETHIONINE DECARBOXYLASE PROENZYME"/>
    <property type="match status" value="1"/>
</dbReference>
<dbReference type="Pfam" id="PF02675">
    <property type="entry name" value="AdoMet_dc"/>
    <property type="match status" value="1"/>
</dbReference>
<dbReference type="SUPFAM" id="SSF56276">
    <property type="entry name" value="S-adenosylmethionine decarboxylase"/>
    <property type="match status" value="1"/>
</dbReference>